<gene>
    <name type="primary">ybhQ</name>
    <name type="ordered locus">SF0741</name>
    <name type="ordered locus">S0782</name>
</gene>
<proteinExistence type="inferred from homology"/>
<comment type="subcellular location">
    <subcellularLocation>
        <location evidence="1">Cell inner membrane</location>
        <topology evidence="1">Multi-pass membrane protein</topology>
    </subcellularLocation>
</comment>
<dbReference type="EMBL" id="AE005674">
    <property type="protein sequence ID" value="AAN42376.1"/>
    <property type="molecule type" value="Genomic_DNA"/>
</dbReference>
<dbReference type="EMBL" id="AE014073">
    <property type="protein sequence ID" value="AAP16253.1"/>
    <property type="molecule type" value="Genomic_DNA"/>
</dbReference>
<dbReference type="RefSeq" id="NP_706669.1">
    <property type="nucleotide sequence ID" value="NC_004337.2"/>
</dbReference>
<dbReference type="RefSeq" id="WP_000871982.1">
    <property type="nucleotide sequence ID" value="NZ_WPGW01000030.1"/>
</dbReference>
<dbReference type="STRING" id="198214.SF0741"/>
<dbReference type="PaxDb" id="198214-SF0741"/>
<dbReference type="GeneID" id="1023732"/>
<dbReference type="KEGG" id="sfl:SF0741"/>
<dbReference type="KEGG" id="sfx:S0782"/>
<dbReference type="PATRIC" id="fig|198214.7.peg.862"/>
<dbReference type="HOGENOM" id="CLU_147415_0_0_6"/>
<dbReference type="Proteomes" id="UP000001006">
    <property type="component" value="Chromosome"/>
</dbReference>
<dbReference type="Proteomes" id="UP000002673">
    <property type="component" value="Chromosome"/>
</dbReference>
<dbReference type="GO" id="GO:0005886">
    <property type="term" value="C:plasma membrane"/>
    <property type="evidence" value="ECO:0007669"/>
    <property type="project" value="UniProtKB-SubCell"/>
</dbReference>
<dbReference type="InterPro" id="IPR021303">
    <property type="entry name" value="Uncharacterised_YbhQ"/>
</dbReference>
<dbReference type="Pfam" id="PF11076">
    <property type="entry name" value="YbhQ"/>
    <property type="match status" value="1"/>
</dbReference>
<keyword id="KW-0997">Cell inner membrane</keyword>
<keyword id="KW-1003">Cell membrane</keyword>
<keyword id="KW-0472">Membrane</keyword>
<keyword id="KW-1185">Reference proteome</keyword>
<keyword id="KW-0812">Transmembrane</keyword>
<keyword id="KW-1133">Transmembrane helix</keyword>
<name>YBHQ_SHIFL</name>
<organism>
    <name type="scientific">Shigella flexneri</name>
    <dbReference type="NCBI Taxonomy" id="623"/>
    <lineage>
        <taxon>Bacteria</taxon>
        <taxon>Pseudomonadati</taxon>
        <taxon>Pseudomonadota</taxon>
        <taxon>Gammaproteobacteria</taxon>
        <taxon>Enterobacterales</taxon>
        <taxon>Enterobacteriaceae</taxon>
        <taxon>Shigella</taxon>
    </lineage>
</organism>
<sequence>MKWQQRVRVATGLSCWQIMLHLLVVALLVVGWMSKTLVHVGVGLCALYCVTVVMMLVFQRHPEQRWREVADVLEELTTTWYFGAALIVLWLLSRVLENNFLLAIAGLAILAGPAVVSLLAKDKKLHHLTSKHRVRR</sequence>
<reference key="1">
    <citation type="journal article" date="2002" name="Nucleic Acids Res.">
        <title>Genome sequence of Shigella flexneri 2a: insights into pathogenicity through comparison with genomes of Escherichia coli K12 and O157.</title>
        <authorList>
            <person name="Jin Q."/>
            <person name="Yuan Z."/>
            <person name="Xu J."/>
            <person name="Wang Y."/>
            <person name="Shen Y."/>
            <person name="Lu W."/>
            <person name="Wang J."/>
            <person name="Liu H."/>
            <person name="Yang J."/>
            <person name="Yang F."/>
            <person name="Zhang X."/>
            <person name="Zhang J."/>
            <person name="Yang G."/>
            <person name="Wu H."/>
            <person name="Qu D."/>
            <person name="Dong J."/>
            <person name="Sun L."/>
            <person name="Xue Y."/>
            <person name="Zhao A."/>
            <person name="Gao Y."/>
            <person name="Zhu J."/>
            <person name="Kan B."/>
            <person name="Ding K."/>
            <person name="Chen S."/>
            <person name="Cheng H."/>
            <person name="Yao Z."/>
            <person name="He B."/>
            <person name="Chen R."/>
            <person name="Ma D."/>
            <person name="Qiang B."/>
            <person name="Wen Y."/>
            <person name="Hou Y."/>
            <person name="Yu J."/>
        </authorList>
    </citation>
    <scope>NUCLEOTIDE SEQUENCE [LARGE SCALE GENOMIC DNA]</scope>
    <source>
        <strain>301 / Serotype 2a</strain>
    </source>
</reference>
<reference key="2">
    <citation type="journal article" date="2003" name="Infect. Immun.">
        <title>Complete genome sequence and comparative genomics of Shigella flexneri serotype 2a strain 2457T.</title>
        <authorList>
            <person name="Wei J."/>
            <person name="Goldberg M.B."/>
            <person name="Burland V."/>
            <person name="Venkatesan M.M."/>
            <person name="Deng W."/>
            <person name="Fournier G."/>
            <person name="Mayhew G.F."/>
            <person name="Plunkett G. III"/>
            <person name="Rose D.J."/>
            <person name="Darling A."/>
            <person name="Mau B."/>
            <person name="Perna N.T."/>
            <person name="Payne S.M."/>
            <person name="Runyen-Janecky L.J."/>
            <person name="Zhou S."/>
            <person name="Schwartz D.C."/>
            <person name="Blattner F.R."/>
        </authorList>
    </citation>
    <scope>NUCLEOTIDE SEQUENCE [LARGE SCALE GENOMIC DNA]</scope>
    <source>
        <strain>ATCC 700930 / 2457T / Serotype 2a</strain>
    </source>
</reference>
<accession>P0AAW8</accession>
<accession>P75773</accession>
<evidence type="ECO:0000250" key="1"/>
<evidence type="ECO:0000255" key="2"/>
<feature type="chain" id="PRO_0000168723" description="Inner membrane protein YbhQ">
    <location>
        <begin position="1"/>
        <end position="136"/>
    </location>
</feature>
<feature type="topological domain" description="Cytoplasmic" evidence="2">
    <location>
        <begin position="1"/>
        <end position="12"/>
    </location>
</feature>
<feature type="transmembrane region" description="Helical" evidence="2">
    <location>
        <begin position="13"/>
        <end position="33"/>
    </location>
</feature>
<feature type="topological domain" description="Periplasmic" evidence="2">
    <location>
        <begin position="34"/>
        <end position="37"/>
    </location>
</feature>
<feature type="transmembrane region" description="Helical" evidence="2">
    <location>
        <begin position="38"/>
        <end position="58"/>
    </location>
</feature>
<feature type="topological domain" description="Cytoplasmic" evidence="2">
    <location>
        <begin position="59"/>
        <end position="71"/>
    </location>
</feature>
<feature type="transmembrane region" description="Helical" evidence="2">
    <location>
        <begin position="72"/>
        <end position="92"/>
    </location>
</feature>
<feature type="topological domain" description="Periplasmic" evidence="2">
    <location>
        <begin position="93"/>
        <end position="99"/>
    </location>
</feature>
<feature type="transmembrane region" description="Helical" evidence="2">
    <location>
        <begin position="100"/>
        <end position="120"/>
    </location>
</feature>
<feature type="topological domain" description="Cytoplasmic" evidence="2">
    <location>
        <begin position="121"/>
        <end position="136"/>
    </location>
</feature>
<protein>
    <recommendedName>
        <fullName>Inner membrane protein YbhQ</fullName>
    </recommendedName>
</protein>